<organism>
    <name type="scientific">Shewanella denitrificans (strain OS217 / ATCC BAA-1090 / DSM 15013)</name>
    <dbReference type="NCBI Taxonomy" id="318161"/>
    <lineage>
        <taxon>Bacteria</taxon>
        <taxon>Pseudomonadati</taxon>
        <taxon>Pseudomonadota</taxon>
        <taxon>Gammaproteobacteria</taxon>
        <taxon>Alteromonadales</taxon>
        <taxon>Shewanellaceae</taxon>
        <taxon>Shewanella</taxon>
    </lineage>
</organism>
<feature type="chain" id="PRO_0000300397" description="DNA-directed RNA polymerase subunit beta">
    <location>
        <begin position="1"/>
        <end position="1343"/>
    </location>
</feature>
<accession>Q12SW6</accession>
<dbReference type="EC" id="2.7.7.6" evidence="1"/>
<dbReference type="EMBL" id="CP000302">
    <property type="protein sequence ID" value="ABE53460.1"/>
    <property type="molecule type" value="Genomic_DNA"/>
</dbReference>
<dbReference type="RefSeq" id="WP_011494629.1">
    <property type="nucleotide sequence ID" value="NC_007954.1"/>
</dbReference>
<dbReference type="SMR" id="Q12SW6"/>
<dbReference type="STRING" id="318161.Sden_0163"/>
<dbReference type="KEGG" id="sdn:Sden_0163"/>
<dbReference type="eggNOG" id="COG0085">
    <property type="taxonomic scope" value="Bacteria"/>
</dbReference>
<dbReference type="HOGENOM" id="CLU_000524_4_3_6"/>
<dbReference type="OrthoDB" id="9803954at2"/>
<dbReference type="Proteomes" id="UP000001982">
    <property type="component" value="Chromosome"/>
</dbReference>
<dbReference type="GO" id="GO:0000428">
    <property type="term" value="C:DNA-directed RNA polymerase complex"/>
    <property type="evidence" value="ECO:0007669"/>
    <property type="project" value="UniProtKB-KW"/>
</dbReference>
<dbReference type="GO" id="GO:0003677">
    <property type="term" value="F:DNA binding"/>
    <property type="evidence" value="ECO:0007669"/>
    <property type="project" value="UniProtKB-UniRule"/>
</dbReference>
<dbReference type="GO" id="GO:0003899">
    <property type="term" value="F:DNA-directed RNA polymerase activity"/>
    <property type="evidence" value="ECO:0007669"/>
    <property type="project" value="UniProtKB-UniRule"/>
</dbReference>
<dbReference type="GO" id="GO:0032549">
    <property type="term" value="F:ribonucleoside binding"/>
    <property type="evidence" value="ECO:0007669"/>
    <property type="project" value="InterPro"/>
</dbReference>
<dbReference type="GO" id="GO:0006351">
    <property type="term" value="P:DNA-templated transcription"/>
    <property type="evidence" value="ECO:0007669"/>
    <property type="project" value="UniProtKB-UniRule"/>
</dbReference>
<dbReference type="CDD" id="cd00653">
    <property type="entry name" value="RNA_pol_B_RPB2"/>
    <property type="match status" value="1"/>
</dbReference>
<dbReference type="FunFam" id="2.40.270.10:FF:000003">
    <property type="entry name" value="DNA-directed RNA polymerase subunit beta"/>
    <property type="match status" value="1"/>
</dbReference>
<dbReference type="FunFam" id="2.40.270.10:FF:000004">
    <property type="entry name" value="DNA-directed RNA polymerase subunit beta"/>
    <property type="match status" value="1"/>
</dbReference>
<dbReference type="FunFam" id="2.40.50.100:FF:000006">
    <property type="entry name" value="DNA-directed RNA polymerase subunit beta"/>
    <property type="match status" value="1"/>
</dbReference>
<dbReference type="FunFam" id="2.40.50.150:FF:000001">
    <property type="entry name" value="DNA-directed RNA polymerase subunit beta"/>
    <property type="match status" value="1"/>
</dbReference>
<dbReference type="FunFam" id="3.90.1100.10:FF:000002">
    <property type="entry name" value="DNA-directed RNA polymerase subunit beta"/>
    <property type="match status" value="1"/>
</dbReference>
<dbReference type="FunFam" id="3.90.1110.10:FF:000001">
    <property type="entry name" value="DNA-directed RNA polymerase subunit beta"/>
    <property type="match status" value="1"/>
</dbReference>
<dbReference type="FunFam" id="3.90.1110.10:FF:000004">
    <property type="entry name" value="DNA-directed RNA polymerase subunit beta"/>
    <property type="match status" value="1"/>
</dbReference>
<dbReference type="FunFam" id="3.90.1800.10:FF:000001">
    <property type="entry name" value="DNA-directed RNA polymerase subunit beta"/>
    <property type="match status" value="1"/>
</dbReference>
<dbReference type="Gene3D" id="2.40.50.100">
    <property type="match status" value="1"/>
</dbReference>
<dbReference type="Gene3D" id="2.40.50.150">
    <property type="match status" value="1"/>
</dbReference>
<dbReference type="Gene3D" id="3.90.1100.10">
    <property type="match status" value="2"/>
</dbReference>
<dbReference type="Gene3D" id="2.30.150.10">
    <property type="entry name" value="DNA-directed RNA polymerase, beta subunit, external 1 domain"/>
    <property type="match status" value="1"/>
</dbReference>
<dbReference type="Gene3D" id="2.40.270.10">
    <property type="entry name" value="DNA-directed RNA polymerase, subunit 2, domain 6"/>
    <property type="match status" value="1"/>
</dbReference>
<dbReference type="Gene3D" id="3.90.1800.10">
    <property type="entry name" value="RNA polymerase alpha subunit dimerisation domain"/>
    <property type="match status" value="1"/>
</dbReference>
<dbReference type="Gene3D" id="3.90.1110.10">
    <property type="entry name" value="RNA polymerase Rpb2, domain 2"/>
    <property type="match status" value="1"/>
</dbReference>
<dbReference type="HAMAP" id="MF_01321">
    <property type="entry name" value="RNApol_bact_RpoB"/>
    <property type="match status" value="1"/>
</dbReference>
<dbReference type="InterPro" id="IPR042107">
    <property type="entry name" value="DNA-dir_RNA_pol_bsu_ext_1_sf"/>
</dbReference>
<dbReference type="InterPro" id="IPR019462">
    <property type="entry name" value="DNA-dir_RNA_pol_bsu_external_1"/>
</dbReference>
<dbReference type="InterPro" id="IPR015712">
    <property type="entry name" value="DNA-dir_RNA_pol_su2"/>
</dbReference>
<dbReference type="InterPro" id="IPR007120">
    <property type="entry name" value="DNA-dir_RNAP_su2_dom"/>
</dbReference>
<dbReference type="InterPro" id="IPR037033">
    <property type="entry name" value="DNA-dir_RNAP_su2_hyb_sf"/>
</dbReference>
<dbReference type="InterPro" id="IPR010243">
    <property type="entry name" value="RNA_pol_bsu_bac"/>
</dbReference>
<dbReference type="InterPro" id="IPR007121">
    <property type="entry name" value="RNA_pol_bsu_CS"/>
</dbReference>
<dbReference type="InterPro" id="IPR007644">
    <property type="entry name" value="RNA_pol_bsu_protrusion"/>
</dbReference>
<dbReference type="InterPro" id="IPR007642">
    <property type="entry name" value="RNA_pol_Rpb2_2"/>
</dbReference>
<dbReference type="InterPro" id="IPR037034">
    <property type="entry name" value="RNA_pol_Rpb2_2_sf"/>
</dbReference>
<dbReference type="InterPro" id="IPR007645">
    <property type="entry name" value="RNA_pol_Rpb2_3"/>
</dbReference>
<dbReference type="InterPro" id="IPR007641">
    <property type="entry name" value="RNA_pol_Rpb2_7"/>
</dbReference>
<dbReference type="InterPro" id="IPR014724">
    <property type="entry name" value="RNA_pol_RPB2_OB-fold"/>
</dbReference>
<dbReference type="NCBIfam" id="NF001616">
    <property type="entry name" value="PRK00405.1"/>
    <property type="match status" value="1"/>
</dbReference>
<dbReference type="NCBIfam" id="TIGR02013">
    <property type="entry name" value="rpoB"/>
    <property type="match status" value="1"/>
</dbReference>
<dbReference type="PANTHER" id="PTHR20856">
    <property type="entry name" value="DNA-DIRECTED RNA POLYMERASE I SUBUNIT 2"/>
    <property type="match status" value="1"/>
</dbReference>
<dbReference type="Pfam" id="PF04563">
    <property type="entry name" value="RNA_pol_Rpb2_1"/>
    <property type="match status" value="1"/>
</dbReference>
<dbReference type="Pfam" id="PF04561">
    <property type="entry name" value="RNA_pol_Rpb2_2"/>
    <property type="match status" value="2"/>
</dbReference>
<dbReference type="Pfam" id="PF04565">
    <property type="entry name" value="RNA_pol_Rpb2_3"/>
    <property type="match status" value="1"/>
</dbReference>
<dbReference type="Pfam" id="PF10385">
    <property type="entry name" value="RNA_pol_Rpb2_45"/>
    <property type="match status" value="1"/>
</dbReference>
<dbReference type="Pfam" id="PF00562">
    <property type="entry name" value="RNA_pol_Rpb2_6"/>
    <property type="match status" value="1"/>
</dbReference>
<dbReference type="Pfam" id="PF04560">
    <property type="entry name" value="RNA_pol_Rpb2_7"/>
    <property type="match status" value="1"/>
</dbReference>
<dbReference type="SUPFAM" id="SSF64484">
    <property type="entry name" value="beta and beta-prime subunits of DNA dependent RNA-polymerase"/>
    <property type="match status" value="1"/>
</dbReference>
<dbReference type="PROSITE" id="PS01166">
    <property type="entry name" value="RNA_POL_BETA"/>
    <property type="match status" value="1"/>
</dbReference>
<keyword id="KW-0240">DNA-directed RNA polymerase</keyword>
<keyword id="KW-0548">Nucleotidyltransferase</keyword>
<keyword id="KW-1185">Reference proteome</keyword>
<keyword id="KW-0804">Transcription</keyword>
<keyword id="KW-0808">Transferase</keyword>
<protein>
    <recommendedName>
        <fullName evidence="1">DNA-directed RNA polymerase subunit beta</fullName>
        <shortName evidence="1">RNAP subunit beta</shortName>
        <ecNumber evidence="1">2.7.7.6</ecNumber>
    </recommendedName>
    <alternativeName>
        <fullName evidence="1">RNA polymerase subunit beta</fullName>
    </alternativeName>
    <alternativeName>
        <fullName evidence="1">Transcriptase subunit beta</fullName>
    </alternativeName>
</protein>
<reference key="1">
    <citation type="submission" date="2006-03" db="EMBL/GenBank/DDBJ databases">
        <title>Complete sequence of Shewanella denitrificans OS217.</title>
        <authorList>
            <consortium name="US DOE Joint Genome Institute"/>
            <person name="Copeland A."/>
            <person name="Lucas S."/>
            <person name="Lapidus A."/>
            <person name="Barry K."/>
            <person name="Detter J.C."/>
            <person name="Glavina del Rio T."/>
            <person name="Hammon N."/>
            <person name="Israni S."/>
            <person name="Dalin E."/>
            <person name="Tice H."/>
            <person name="Pitluck S."/>
            <person name="Brettin T."/>
            <person name="Bruce D."/>
            <person name="Han C."/>
            <person name="Tapia R."/>
            <person name="Gilna P."/>
            <person name="Kiss H."/>
            <person name="Schmutz J."/>
            <person name="Larimer F."/>
            <person name="Land M."/>
            <person name="Hauser L."/>
            <person name="Kyrpides N."/>
            <person name="Lykidis A."/>
            <person name="Richardson P."/>
        </authorList>
    </citation>
    <scope>NUCLEOTIDE SEQUENCE [LARGE SCALE GENOMIC DNA]</scope>
    <source>
        <strain>OS217 / ATCC BAA-1090 / DSM 15013</strain>
    </source>
</reference>
<evidence type="ECO:0000255" key="1">
    <source>
        <dbReference type="HAMAP-Rule" id="MF_01321"/>
    </source>
</evidence>
<name>RPOB_SHEDO</name>
<proteinExistence type="inferred from homology"/>
<gene>
    <name evidence="1" type="primary">rpoB</name>
    <name type="ordered locus">Sden_0163</name>
</gene>
<sequence length="1343" mass="150123">MVYSYSEKKRIRKDFGKRPQVLDIPYLLSIQLDSFKKFTDQDPTGERGFEAAFRSVFPIKSFSGYSELQYVSYKLGEPVFDVKECQIRGVTYSAPLRVKLRMVLFDREAAAGTVKDIKEQEVYMGDIPLMTDNGTFVINGTERVIVSQLHRSPGVFFDHDRGKTHSSGKVLYNARIIPYRGSWLDFEFDPKDALFVRIDRRRKLPATIMLRALEYSTQDILDLFFERIQFKIKKDSLVMALVPDRLRGETASYDIKAADGSVLVEAGRRITARHIKQLEQSNTTELEVPVDYIVGKYAAQDYIDEDTGEVLVSANNEISLEDLAKLSIAGIKEIDTLFINDLDHGAYISDTLRIDSTTNRLEALVEIYRMMRPGEPPTKDAAEALFQNLFFSEERYDLSKVGRMKFNRRLEIAEDEGNGVLSKDDIVCVMKKIIEIRNGYDEVDDIDHLGNRRIRSVGEMAENQFRVGLVRVERAVRERLSLGDLNELMPQDLINAKPISAAVKEFFGSSQLSQFMDQNNPLSEVTHKRRISALGPGGLTRERAGFEVRDVHPTHYGRLCPIETPEGPNIGLINSLASFARTNSYGFLETPYRKVVEGVITDEVEYLSAIEEGRYVIAQANIEVDSTGRMVEEQIACRHKGESTFMRAADIQYMDVSPQQIISVAASLIPFLEHDDANRALMGANMQRQAVPTLRADKPLVGTGIERTLAVDSGVVVVAKRGGVVDYVDASRIVVKVNEDELRPGEAGIDIYNLTKYTRSNQNTCINQRPCCFVGEPVVRGDVLADGPSTDLGELALGQNMRIAFMPWNGYNFEDSILISERVAQEDRFTTIHIQELSCIARDTKLGSEEITADIPNVGESALSKLDESGIVYIGAEVKGGDILVGKVTPKGETQLTPEEKLLRAIFGEKASDVKDSSLRVPNSVKGTIIDVQVFTRDGVEKDKRALEIEEMHVAQARKDLGEEFKILEEGVLSRARNLLLSAGYSEAKLAELPRKDVLIQVIDDEAKQTELEQLAEQHEELKADFDKKFEIKRRKITQGDDLAPGVLKIVKVYLAVKRTIQPGDKMAGRHGNKGVISKICPVEDMPYDEEGNPVDIVLNPLGVPSRMNIGQVLEVHMGAAAKGIGNKITAMLEEQREIAELRGYIKQVYELGDDVLQRVDIDSFSDDEVVRLATHLKGGIPIATPAFDGAKEKEIKQMLALAGLPESGQLTLCDGRTGNEFERKVTVGYMYMLKLNHLVDDKMHARSTGSYSLVTQQPLGGKAQFGGQRFGEMEVWALEAYGAAYTLQEMLTVKSDDVNGRTQMYKNIVDGNHQMQPGMPESFNVLLKEIRSLGINIELDQE</sequence>
<comment type="function">
    <text evidence="1">DNA-dependent RNA polymerase catalyzes the transcription of DNA into RNA using the four ribonucleoside triphosphates as substrates.</text>
</comment>
<comment type="catalytic activity">
    <reaction evidence="1">
        <text>RNA(n) + a ribonucleoside 5'-triphosphate = RNA(n+1) + diphosphate</text>
        <dbReference type="Rhea" id="RHEA:21248"/>
        <dbReference type="Rhea" id="RHEA-COMP:14527"/>
        <dbReference type="Rhea" id="RHEA-COMP:17342"/>
        <dbReference type="ChEBI" id="CHEBI:33019"/>
        <dbReference type="ChEBI" id="CHEBI:61557"/>
        <dbReference type="ChEBI" id="CHEBI:140395"/>
        <dbReference type="EC" id="2.7.7.6"/>
    </reaction>
</comment>
<comment type="subunit">
    <text evidence="1">The RNAP catalytic core consists of 2 alpha, 1 beta, 1 beta' and 1 omega subunit. When a sigma factor is associated with the core the holoenzyme is formed, which can initiate transcription.</text>
</comment>
<comment type="similarity">
    <text evidence="1">Belongs to the RNA polymerase beta chain family.</text>
</comment>